<keyword id="KW-0349">Heme</keyword>
<keyword id="KW-0408">Iron</keyword>
<keyword id="KW-0479">Metal-binding</keyword>
<keyword id="KW-0503">Monooxygenase</keyword>
<keyword id="KW-0560">Oxidoreductase</keyword>
<keyword id="KW-1185">Reference proteome</keyword>
<feature type="chain" id="PRO_0000459620" description="Cytochrome P450 monooxygenase xilC">
    <location>
        <begin position="1"/>
        <end position="572"/>
    </location>
</feature>
<feature type="binding site" description="axial binding residue" evidence="1">
    <location>
        <position position="515"/>
    </location>
    <ligand>
        <name>heme</name>
        <dbReference type="ChEBI" id="CHEBI:30413"/>
    </ligand>
    <ligandPart>
        <name>Fe</name>
        <dbReference type="ChEBI" id="CHEBI:18248"/>
    </ligandPart>
</feature>
<accession>A0A9P5GH02</accession>
<name>XILC_PENCR</name>
<sequence length="572" mass="65105">MSRLEIALSSTLDHLLKHIFLGTVFLTSLYALYRWLLPKPLPGIPFNQKSAQSIWGDVVELRDDPSGLAKWCSKQLENHGSPICQALMGPLSKPVVLVADVGNAREMLMGRSDFDRSAYIIDRFPLFGEFHLNMKTGDNWRQSRNWLKDLLAPQYLHNVAGPAIHSSVLKLIKLWEHKSCVGDSRAFNMVSDLKTLALDVIVAFHFGSDFQDSALDRQVDHVGKLDGSKLPCGEHNEVEFSKAPLHEFQQALTDVGDKMAAIYTTKWPPLIVAWWVRYVSPYYRPFFQAKDRFIRKHINLAVRRYRNDEEPSTGIDYMVYREEKAARKAYRQPMFDKQIMIDEAYGNLIAGQHTTSAALVWILKLLADYPSVQEKLREELQGIFVGAMQENRLPTAAEIITSKLPYLDAVLEETLRLRAAMLVPRDATKDTELLGRRIPKGTVVLLVCQGPDYKPSPPSKYWSDVKASRVYPGKGNPDLEVFDPERWLVRNEKGDLEFDGSSYPQLAFGLGIRSCWGRRLAMVEMRIMTTLMTLKFELKDVPEGLRGHEASYDISYRAKKGFLRLKSLGEVP</sequence>
<proteinExistence type="evidence at protein level"/>
<protein>
    <recommendedName>
        <fullName evidence="3">Cytochrome P450 monooxygenase xilC</fullName>
        <ecNumber evidence="2">1.-.-.-</ecNumber>
    </recommendedName>
    <alternativeName>
        <fullName evidence="3">Xylariolide D biosynthesis cluster protein C</fullName>
    </alternativeName>
</protein>
<comment type="function">
    <text evidence="2">Cytochrome P450 monooxygenase; part of the gene cluster that mediates the biosynthesis of the 6-methyl-2-pyrone derivative xylariolide D (PubMed:35628749). XilC hydroxylates the 5-alkyl-6-methyl-2-pyrone backbone called prexylariolide D, produced by the highly reducing polyketide synthase xilA, on its side chain to form xylariolide D (PubMed:35628749).</text>
</comment>
<comment type="cofactor">
    <cofactor evidence="1">
        <name>heme</name>
        <dbReference type="ChEBI" id="CHEBI:30413"/>
    </cofactor>
</comment>
<comment type="pathway">
    <text evidence="2">Secondary metabolite biosynthesis.</text>
</comment>
<comment type="similarity">
    <text evidence="4">Belongs to the cytochrome P450 family.</text>
</comment>
<reference key="1">
    <citation type="submission" date="2020-02" db="EMBL/GenBank/DDBJ databases">
        <authorList>
            <person name="Lichtner F.J."/>
        </authorList>
    </citation>
    <scope>NUCLEOTIDE SEQUENCE [LARGE SCALE GENOMIC DNA]</scope>
    <source>
        <strain>G10</strain>
    </source>
</reference>
<reference key="2">
    <citation type="journal article" date="2022" name="J. Fungi">
        <title>Biosynthesis of xylariolide D in Penicillium crustosum implies a chain branching reaction catalyzed by a highly reducing polyketide synthase.</title>
        <authorList>
            <person name="Stierle S.A."/>
            <person name="Li S.M."/>
        </authorList>
    </citation>
    <scope>FUNCTION</scope>
    <scope>CATALYTIC ACTIVITY</scope>
    <scope>PATHWAY</scope>
</reference>
<evidence type="ECO:0000250" key="1">
    <source>
        <dbReference type="UniProtKB" id="P04798"/>
    </source>
</evidence>
<evidence type="ECO:0000269" key="2">
    <source>
    </source>
</evidence>
<evidence type="ECO:0000303" key="3">
    <source>
    </source>
</evidence>
<evidence type="ECO:0000305" key="4"/>
<organism>
    <name type="scientific">Penicillium crustosum</name>
    <name type="common">Blue mold fungus</name>
    <dbReference type="NCBI Taxonomy" id="36656"/>
    <lineage>
        <taxon>Eukaryota</taxon>
        <taxon>Fungi</taxon>
        <taxon>Dikarya</taxon>
        <taxon>Ascomycota</taxon>
        <taxon>Pezizomycotina</taxon>
        <taxon>Eurotiomycetes</taxon>
        <taxon>Eurotiomycetidae</taxon>
        <taxon>Eurotiales</taxon>
        <taxon>Aspergillaceae</taxon>
        <taxon>Penicillium</taxon>
    </lineage>
</organism>
<gene>
    <name evidence="3" type="primary">xilC</name>
    <name type="ORF">PCG10_001211</name>
</gene>
<dbReference type="EC" id="1.-.-.-" evidence="2"/>
<dbReference type="EMBL" id="JAAOZQ010000115">
    <property type="protein sequence ID" value="KAF7517449.1"/>
    <property type="molecule type" value="Genomic_DNA"/>
</dbReference>
<dbReference type="Proteomes" id="UP000701341">
    <property type="component" value="Unassembled WGS sequence"/>
</dbReference>
<dbReference type="GO" id="GO:0020037">
    <property type="term" value="F:heme binding"/>
    <property type="evidence" value="ECO:0007669"/>
    <property type="project" value="InterPro"/>
</dbReference>
<dbReference type="GO" id="GO:0005506">
    <property type="term" value="F:iron ion binding"/>
    <property type="evidence" value="ECO:0007669"/>
    <property type="project" value="InterPro"/>
</dbReference>
<dbReference type="GO" id="GO:0004497">
    <property type="term" value="F:monooxygenase activity"/>
    <property type="evidence" value="ECO:0007669"/>
    <property type="project" value="UniProtKB-KW"/>
</dbReference>
<dbReference type="GO" id="GO:0016705">
    <property type="term" value="F:oxidoreductase activity, acting on paired donors, with incorporation or reduction of molecular oxygen"/>
    <property type="evidence" value="ECO:0007669"/>
    <property type="project" value="InterPro"/>
</dbReference>
<dbReference type="GO" id="GO:0043386">
    <property type="term" value="P:mycotoxin biosynthetic process"/>
    <property type="evidence" value="ECO:0007669"/>
    <property type="project" value="UniProtKB-ARBA"/>
</dbReference>
<dbReference type="Gene3D" id="1.10.630.10">
    <property type="entry name" value="Cytochrome P450"/>
    <property type="match status" value="1"/>
</dbReference>
<dbReference type="InterPro" id="IPR001128">
    <property type="entry name" value="Cyt_P450"/>
</dbReference>
<dbReference type="InterPro" id="IPR002403">
    <property type="entry name" value="Cyt_P450_E_grp-IV"/>
</dbReference>
<dbReference type="InterPro" id="IPR036396">
    <property type="entry name" value="Cyt_P450_sf"/>
</dbReference>
<dbReference type="InterPro" id="IPR050121">
    <property type="entry name" value="Cytochrome_P450_monoxygenase"/>
</dbReference>
<dbReference type="PANTHER" id="PTHR24305">
    <property type="entry name" value="CYTOCHROME P450"/>
    <property type="match status" value="1"/>
</dbReference>
<dbReference type="PANTHER" id="PTHR24305:SF166">
    <property type="entry name" value="CYTOCHROME P450 12A4, MITOCHONDRIAL-RELATED"/>
    <property type="match status" value="1"/>
</dbReference>
<dbReference type="Pfam" id="PF00067">
    <property type="entry name" value="p450"/>
    <property type="match status" value="2"/>
</dbReference>
<dbReference type="PRINTS" id="PR00465">
    <property type="entry name" value="EP450IV"/>
</dbReference>
<dbReference type="PRINTS" id="PR00385">
    <property type="entry name" value="P450"/>
</dbReference>
<dbReference type="SUPFAM" id="SSF48264">
    <property type="entry name" value="Cytochrome P450"/>
    <property type="match status" value="1"/>
</dbReference>